<proteinExistence type="inferred from homology"/>
<feature type="chain" id="PRO_1000014945" description="Chaperone protein HtpG">
    <location>
        <begin position="1"/>
        <end position="621"/>
    </location>
</feature>
<feature type="region of interest" description="A; substrate-binding" evidence="1">
    <location>
        <begin position="1"/>
        <end position="328"/>
    </location>
</feature>
<feature type="region of interest" description="B" evidence="1">
    <location>
        <begin position="329"/>
        <end position="544"/>
    </location>
</feature>
<feature type="region of interest" description="Disordered" evidence="2">
    <location>
        <begin position="475"/>
        <end position="495"/>
    </location>
</feature>
<feature type="region of interest" description="C" evidence="1">
    <location>
        <begin position="545"/>
        <end position="621"/>
    </location>
</feature>
<feature type="compositionally biased region" description="Basic and acidic residues" evidence="2">
    <location>
        <begin position="486"/>
        <end position="495"/>
    </location>
</feature>
<dbReference type="EMBL" id="CP000847">
    <property type="protein sequence ID" value="ABV75526.1"/>
    <property type="molecule type" value="Genomic_DNA"/>
</dbReference>
<dbReference type="RefSeq" id="WP_012150155.1">
    <property type="nucleotide sequence ID" value="NC_009881.1"/>
</dbReference>
<dbReference type="SMR" id="A8GQ51"/>
<dbReference type="STRING" id="293614.A1C_06515"/>
<dbReference type="KEGG" id="rak:A1C_06515"/>
<dbReference type="eggNOG" id="COG0326">
    <property type="taxonomic scope" value="Bacteria"/>
</dbReference>
<dbReference type="HOGENOM" id="CLU_006684_3_0_5"/>
<dbReference type="Proteomes" id="UP000006830">
    <property type="component" value="Chromosome"/>
</dbReference>
<dbReference type="GO" id="GO:0005737">
    <property type="term" value="C:cytoplasm"/>
    <property type="evidence" value="ECO:0007669"/>
    <property type="project" value="UniProtKB-SubCell"/>
</dbReference>
<dbReference type="GO" id="GO:0005524">
    <property type="term" value="F:ATP binding"/>
    <property type="evidence" value="ECO:0007669"/>
    <property type="project" value="UniProtKB-UniRule"/>
</dbReference>
<dbReference type="GO" id="GO:0016887">
    <property type="term" value="F:ATP hydrolysis activity"/>
    <property type="evidence" value="ECO:0007669"/>
    <property type="project" value="InterPro"/>
</dbReference>
<dbReference type="GO" id="GO:0140662">
    <property type="term" value="F:ATP-dependent protein folding chaperone"/>
    <property type="evidence" value="ECO:0007669"/>
    <property type="project" value="InterPro"/>
</dbReference>
<dbReference type="GO" id="GO:0051082">
    <property type="term" value="F:unfolded protein binding"/>
    <property type="evidence" value="ECO:0007669"/>
    <property type="project" value="UniProtKB-UniRule"/>
</dbReference>
<dbReference type="CDD" id="cd16927">
    <property type="entry name" value="HATPase_Hsp90-like"/>
    <property type="match status" value="1"/>
</dbReference>
<dbReference type="FunFam" id="3.30.565.10:FF:000009">
    <property type="entry name" value="Molecular chaperone HtpG"/>
    <property type="match status" value="1"/>
</dbReference>
<dbReference type="Gene3D" id="3.30.230.80">
    <property type="match status" value="1"/>
</dbReference>
<dbReference type="Gene3D" id="3.40.50.11260">
    <property type="match status" value="1"/>
</dbReference>
<dbReference type="Gene3D" id="1.20.120.790">
    <property type="entry name" value="Heat shock protein 90, C-terminal domain"/>
    <property type="match status" value="1"/>
</dbReference>
<dbReference type="Gene3D" id="3.30.565.10">
    <property type="entry name" value="Histidine kinase-like ATPase, C-terminal domain"/>
    <property type="match status" value="1"/>
</dbReference>
<dbReference type="HAMAP" id="MF_00505">
    <property type="entry name" value="HSP90"/>
    <property type="match status" value="1"/>
</dbReference>
<dbReference type="InterPro" id="IPR036890">
    <property type="entry name" value="HATPase_C_sf"/>
</dbReference>
<dbReference type="InterPro" id="IPR019805">
    <property type="entry name" value="Heat_shock_protein_90_CS"/>
</dbReference>
<dbReference type="InterPro" id="IPR037196">
    <property type="entry name" value="HSP90_C"/>
</dbReference>
<dbReference type="InterPro" id="IPR001404">
    <property type="entry name" value="Hsp90_fam"/>
</dbReference>
<dbReference type="InterPro" id="IPR020575">
    <property type="entry name" value="Hsp90_N"/>
</dbReference>
<dbReference type="InterPro" id="IPR020568">
    <property type="entry name" value="Ribosomal_Su5_D2-typ_SF"/>
</dbReference>
<dbReference type="NCBIfam" id="NF003555">
    <property type="entry name" value="PRK05218.1"/>
    <property type="match status" value="1"/>
</dbReference>
<dbReference type="PANTHER" id="PTHR11528">
    <property type="entry name" value="HEAT SHOCK PROTEIN 90 FAMILY MEMBER"/>
    <property type="match status" value="1"/>
</dbReference>
<dbReference type="Pfam" id="PF13589">
    <property type="entry name" value="HATPase_c_3"/>
    <property type="match status" value="1"/>
</dbReference>
<dbReference type="Pfam" id="PF00183">
    <property type="entry name" value="HSP90"/>
    <property type="match status" value="1"/>
</dbReference>
<dbReference type="PIRSF" id="PIRSF002583">
    <property type="entry name" value="Hsp90"/>
    <property type="match status" value="1"/>
</dbReference>
<dbReference type="PRINTS" id="PR00775">
    <property type="entry name" value="HEATSHOCK90"/>
</dbReference>
<dbReference type="SMART" id="SM00387">
    <property type="entry name" value="HATPase_c"/>
    <property type="match status" value="1"/>
</dbReference>
<dbReference type="SUPFAM" id="SSF55874">
    <property type="entry name" value="ATPase domain of HSP90 chaperone/DNA topoisomerase II/histidine kinase"/>
    <property type="match status" value="1"/>
</dbReference>
<dbReference type="SUPFAM" id="SSF110942">
    <property type="entry name" value="HSP90 C-terminal domain"/>
    <property type="match status" value="1"/>
</dbReference>
<dbReference type="SUPFAM" id="SSF54211">
    <property type="entry name" value="Ribosomal protein S5 domain 2-like"/>
    <property type="match status" value="1"/>
</dbReference>
<dbReference type="PROSITE" id="PS00298">
    <property type="entry name" value="HSP90"/>
    <property type="match status" value="1"/>
</dbReference>
<protein>
    <recommendedName>
        <fullName evidence="1">Chaperone protein HtpG</fullName>
    </recommendedName>
    <alternativeName>
        <fullName evidence="1">Heat shock protein HtpG</fullName>
    </alternativeName>
    <alternativeName>
        <fullName evidence="1">High temperature protein G</fullName>
    </alternativeName>
</protein>
<accession>A8GQ51</accession>
<name>HTPG_RICAH</name>
<gene>
    <name evidence="1" type="primary">htpG</name>
    <name type="ordered locus">A1C_06515</name>
</gene>
<sequence>MTQEKKKFDAEVGKILNLMIHSLYSNKEIFMRELISNASDACDKLRYLSQSHSELVASDSNFKITVKVDKDNWQIIIRDNGIGMNKEDLIDNLGTIARSGTANFLKSLSGDSKKDNMLIGQFGVGFYSSFMVADKVTVTSRKAGEDTVHVWESDGLGEYIVSDSDKEFTRGTEIILHIKKEEDIFLDHFRLKHIVKSYSDHVAVPIYFFDEAGNNEIQLNSASALWTRPKSEITEEQYKEFYKSLSYAVDDPWITMHNKNEGAIEFTNLLFIPSSKTFDLFHPDRKRRVKLYIKRVFISDENIDLIPSYLRFLRGVVDSEDLPLNISRESLQHNSVLEKIKNAITKRVLGELRKKKEESSEEYNKFWANFGGALKEGLCEATTDHEKLLEVCIFRSALHNKMISLDEYIAGFKEEQNTIYYLSGDNPDKLLSSPQIEGLLSKNIDVLLFTDTVDDFWVNVNSEYKGHAIKSATRSDIDVEQTTSQSEDKNTHSKKSDDEYKLLTDYFKETLGKLVKEVKISKKLTSSPACLAVSDSAMDIRMERFLIEQKQITAASAKNLELNPKNKIIEKIFNDLKANNKNNEELVNLIFDQACILEGEPVADTGAFSKRLNDIVQKAIL</sequence>
<evidence type="ECO:0000255" key="1">
    <source>
        <dbReference type="HAMAP-Rule" id="MF_00505"/>
    </source>
</evidence>
<evidence type="ECO:0000256" key="2">
    <source>
        <dbReference type="SAM" id="MobiDB-lite"/>
    </source>
</evidence>
<comment type="function">
    <text evidence="1">Molecular chaperone. Has ATPase activity.</text>
</comment>
<comment type="subunit">
    <text evidence="1">Homodimer.</text>
</comment>
<comment type="subcellular location">
    <subcellularLocation>
        <location evidence="1">Cytoplasm</location>
    </subcellularLocation>
</comment>
<comment type="similarity">
    <text evidence="1">Belongs to the heat shock protein 90 family.</text>
</comment>
<keyword id="KW-0067">ATP-binding</keyword>
<keyword id="KW-0143">Chaperone</keyword>
<keyword id="KW-0963">Cytoplasm</keyword>
<keyword id="KW-0547">Nucleotide-binding</keyword>
<keyword id="KW-0346">Stress response</keyword>
<organism>
    <name type="scientific">Rickettsia akari (strain Hartford)</name>
    <dbReference type="NCBI Taxonomy" id="293614"/>
    <lineage>
        <taxon>Bacteria</taxon>
        <taxon>Pseudomonadati</taxon>
        <taxon>Pseudomonadota</taxon>
        <taxon>Alphaproteobacteria</taxon>
        <taxon>Rickettsiales</taxon>
        <taxon>Rickettsiaceae</taxon>
        <taxon>Rickettsieae</taxon>
        <taxon>Rickettsia</taxon>
        <taxon>spotted fever group</taxon>
    </lineage>
</organism>
<reference key="1">
    <citation type="submission" date="2007-09" db="EMBL/GenBank/DDBJ databases">
        <title>Complete genome sequence of Rickettsia akari.</title>
        <authorList>
            <person name="Madan A."/>
            <person name="Fahey J."/>
            <person name="Helton E."/>
            <person name="Ketteman M."/>
            <person name="Madan A."/>
            <person name="Rodrigues S."/>
            <person name="Sanchez A."/>
            <person name="Whiting M."/>
            <person name="Dasch G."/>
            <person name="Eremeeva M."/>
        </authorList>
    </citation>
    <scope>NUCLEOTIDE SEQUENCE [LARGE SCALE GENOMIC DNA]</scope>
    <source>
        <strain>Hartford</strain>
    </source>
</reference>